<comment type="function">
    <text evidence="1">Catalyzes a reversible aldol reaction between acetaldehyde and D-glyceraldehyde 3-phosphate to generate 2-deoxy-D-ribose 5-phosphate.</text>
</comment>
<comment type="catalytic activity">
    <reaction evidence="1">
        <text>2-deoxy-D-ribose 5-phosphate = D-glyceraldehyde 3-phosphate + acetaldehyde</text>
        <dbReference type="Rhea" id="RHEA:12821"/>
        <dbReference type="ChEBI" id="CHEBI:15343"/>
        <dbReference type="ChEBI" id="CHEBI:59776"/>
        <dbReference type="ChEBI" id="CHEBI:62877"/>
        <dbReference type="EC" id="4.1.2.4"/>
    </reaction>
</comment>
<comment type="pathway">
    <text evidence="1">Carbohydrate degradation; 2-deoxy-D-ribose 1-phosphate degradation; D-glyceraldehyde 3-phosphate and acetaldehyde from 2-deoxy-alpha-D-ribose 1-phosphate: step 2/2.</text>
</comment>
<comment type="subcellular location">
    <subcellularLocation>
        <location evidence="1">Cytoplasm</location>
    </subcellularLocation>
</comment>
<comment type="similarity">
    <text evidence="1">Belongs to the DeoC/FbaB aldolase family. DeoC type 1 subfamily.</text>
</comment>
<gene>
    <name evidence="1" type="primary">deoC</name>
    <name type="ordered locus">SMU_1123</name>
</gene>
<evidence type="ECO:0000255" key="1">
    <source>
        <dbReference type="HAMAP-Rule" id="MF_00114"/>
    </source>
</evidence>
<organism>
    <name type="scientific">Streptococcus mutans serotype c (strain ATCC 700610 / UA159)</name>
    <dbReference type="NCBI Taxonomy" id="210007"/>
    <lineage>
        <taxon>Bacteria</taxon>
        <taxon>Bacillati</taxon>
        <taxon>Bacillota</taxon>
        <taxon>Bacilli</taxon>
        <taxon>Lactobacillales</taxon>
        <taxon>Streptococcaceae</taxon>
        <taxon>Streptococcus</taxon>
    </lineage>
</organism>
<feature type="chain" id="PRO_0000057271" description="Deoxyribose-phosphate aldolase">
    <location>
        <begin position="1"/>
        <end position="220"/>
    </location>
</feature>
<feature type="active site" description="Proton donor/acceptor" evidence="1">
    <location>
        <position position="89"/>
    </location>
</feature>
<feature type="active site" description="Schiff-base intermediate with acetaldehyde" evidence="1">
    <location>
        <position position="151"/>
    </location>
</feature>
<feature type="active site" description="Proton donor/acceptor" evidence="1">
    <location>
        <position position="180"/>
    </location>
</feature>
<keyword id="KW-0963">Cytoplasm</keyword>
<keyword id="KW-0456">Lyase</keyword>
<keyword id="KW-1185">Reference proteome</keyword>
<keyword id="KW-0704">Schiff base</keyword>
<protein>
    <recommendedName>
        <fullName evidence="1">Deoxyribose-phosphate aldolase</fullName>
        <shortName evidence="1">DERA</shortName>
        <ecNumber evidence="1">4.1.2.4</ecNumber>
    </recommendedName>
    <alternativeName>
        <fullName evidence="1">2-deoxy-D-ribose 5-phosphate aldolase</fullName>
    </alternativeName>
    <alternativeName>
        <fullName evidence="1">Phosphodeoxyriboaldolase</fullName>
        <shortName evidence="1">Deoxyriboaldolase</shortName>
    </alternativeName>
</protein>
<name>DEOC_STRMU</name>
<proteinExistence type="inferred from homology"/>
<accession>Q8DU34</accession>
<dbReference type="EC" id="4.1.2.4" evidence="1"/>
<dbReference type="EMBL" id="AE014133">
    <property type="protein sequence ID" value="AAN58816.1"/>
    <property type="molecule type" value="Genomic_DNA"/>
</dbReference>
<dbReference type="RefSeq" id="NP_721510.1">
    <property type="nucleotide sequence ID" value="NC_004350.2"/>
</dbReference>
<dbReference type="RefSeq" id="WP_002262220.1">
    <property type="nucleotide sequence ID" value="NC_004350.2"/>
</dbReference>
<dbReference type="SMR" id="Q8DU34"/>
<dbReference type="STRING" id="210007.SMU_1123"/>
<dbReference type="KEGG" id="smu:SMU_1123"/>
<dbReference type="PATRIC" id="fig|210007.7.peg.1006"/>
<dbReference type="eggNOG" id="COG0274">
    <property type="taxonomic scope" value="Bacteria"/>
</dbReference>
<dbReference type="HOGENOM" id="CLU_053595_0_1_9"/>
<dbReference type="OrthoDB" id="9778711at2"/>
<dbReference type="PhylomeDB" id="Q8DU34"/>
<dbReference type="UniPathway" id="UPA00002">
    <property type="reaction ID" value="UER00468"/>
</dbReference>
<dbReference type="Proteomes" id="UP000002512">
    <property type="component" value="Chromosome"/>
</dbReference>
<dbReference type="GO" id="GO:0005737">
    <property type="term" value="C:cytoplasm"/>
    <property type="evidence" value="ECO:0007669"/>
    <property type="project" value="UniProtKB-SubCell"/>
</dbReference>
<dbReference type="GO" id="GO:0004139">
    <property type="term" value="F:deoxyribose-phosphate aldolase activity"/>
    <property type="evidence" value="ECO:0007669"/>
    <property type="project" value="UniProtKB-UniRule"/>
</dbReference>
<dbReference type="GO" id="GO:0006018">
    <property type="term" value="P:2-deoxyribose 1-phosphate catabolic process"/>
    <property type="evidence" value="ECO:0007669"/>
    <property type="project" value="UniProtKB-UniRule"/>
</dbReference>
<dbReference type="GO" id="GO:0016052">
    <property type="term" value="P:carbohydrate catabolic process"/>
    <property type="evidence" value="ECO:0007669"/>
    <property type="project" value="TreeGrafter"/>
</dbReference>
<dbReference type="GO" id="GO:0009264">
    <property type="term" value="P:deoxyribonucleotide catabolic process"/>
    <property type="evidence" value="ECO:0007669"/>
    <property type="project" value="InterPro"/>
</dbReference>
<dbReference type="CDD" id="cd00959">
    <property type="entry name" value="DeoC"/>
    <property type="match status" value="1"/>
</dbReference>
<dbReference type="FunFam" id="3.20.20.70:FF:000044">
    <property type="entry name" value="Deoxyribose-phosphate aldolase"/>
    <property type="match status" value="1"/>
</dbReference>
<dbReference type="Gene3D" id="3.20.20.70">
    <property type="entry name" value="Aldolase class I"/>
    <property type="match status" value="1"/>
</dbReference>
<dbReference type="HAMAP" id="MF_00114">
    <property type="entry name" value="DeoC_type1"/>
    <property type="match status" value="1"/>
</dbReference>
<dbReference type="InterPro" id="IPR013785">
    <property type="entry name" value="Aldolase_TIM"/>
</dbReference>
<dbReference type="InterPro" id="IPR011343">
    <property type="entry name" value="DeoC"/>
</dbReference>
<dbReference type="InterPro" id="IPR002915">
    <property type="entry name" value="DeoC/FbaB/LacD_aldolase"/>
</dbReference>
<dbReference type="InterPro" id="IPR028581">
    <property type="entry name" value="DeoC_typeI"/>
</dbReference>
<dbReference type="NCBIfam" id="TIGR00126">
    <property type="entry name" value="deoC"/>
    <property type="match status" value="1"/>
</dbReference>
<dbReference type="PANTHER" id="PTHR10889">
    <property type="entry name" value="DEOXYRIBOSE-PHOSPHATE ALDOLASE"/>
    <property type="match status" value="1"/>
</dbReference>
<dbReference type="PANTHER" id="PTHR10889:SF1">
    <property type="entry name" value="DEOXYRIBOSE-PHOSPHATE ALDOLASE"/>
    <property type="match status" value="1"/>
</dbReference>
<dbReference type="Pfam" id="PF01791">
    <property type="entry name" value="DeoC"/>
    <property type="match status" value="1"/>
</dbReference>
<dbReference type="PIRSF" id="PIRSF001357">
    <property type="entry name" value="DeoC"/>
    <property type="match status" value="1"/>
</dbReference>
<dbReference type="SMART" id="SM01133">
    <property type="entry name" value="DeoC"/>
    <property type="match status" value="1"/>
</dbReference>
<dbReference type="SUPFAM" id="SSF51569">
    <property type="entry name" value="Aldolase"/>
    <property type="match status" value="1"/>
</dbReference>
<reference key="1">
    <citation type="journal article" date="2002" name="Proc. Natl. Acad. Sci. U.S.A.">
        <title>Genome sequence of Streptococcus mutans UA159, a cariogenic dental pathogen.</title>
        <authorList>
            <person name="Ajdic D.J."/>
            <person name="McShan W.M."/>
            <person name="McLaughlin R.E."/>
            <person name="Savic G."/>
            <person name="Chang J."/>
            <person name="Carson M.B."/>
            <person name="Primeaux C."/>
            <person name="Tian R."/>
            <person name="Kenton S."/>
            <person name="Jia H.G."/>
            <person name="Lin S.P."/>
            <person name="Qian Y."/>
            <person name="Li S."/>
            <person name="Zhu H."/>
            <person name="Najar F.Z."/>
            <person name="Lai H."/>
            <person name="White J."/>
            <person name="Roe B.A."/>
            <person name="Ferretti J.J."/>
        </authorList>
    </citation>
    <scope>NUCLEOTIDE SEQUENCE [LARGE SCALE GENOMIC DNA]</scope>
    <source>
        <strain>ATCC 700610 / UA159</strain>
    </source>
</reference>
<sequence length="220" mass="23364">MKINQYIDHTLLKPESRQDQIDKLIREAKTYNFASVCINPTWVSYAAKALEGTDIKVCTVIGFPLGATTSAVKAFETKDAISHGADEVDMVINIGQAKSGHFAFVEEDIRAVVEASGDKLVKVIIETCLLTDKEKIKACQAAVAAGADFVKTSTGFSTAGARLDDVRLMRQTVGPDVGVKAAGGTRSLEDAQAFIEAGATRIGTSAGVTIMEGKQTNSGY</sequence>